<dbReference type="EMBL" id="AB009889">
    <property type="protein sequence ID" value="BAA32480.1"/>
    <property type="molecule type" value="mRNA"/>
</dbReference>
<dbReference type="PIR" id="C60580">
    <property type="entry name" value="C60580"/>
</dbReference>
<dbReference type="RefSeq" id="NP_067591.1">
    <property type="nucleotide sequence ID" value="NM_021580.1"/>
</dbReference>
<dbReference type="SMR" id="P33580"/>
<dbReference type="FunCoup" id="P33580">
    <property type="interactions" value="1"/>
</dbReference>
<dbReference type="STRING" id="10116.ENSRNOP00000022614"/>
<dbReference type="GlyCosmos" id="P33580">
    <property type="glycosylation" value="2 sites, No reported glycans"/>
</dbReference>
<dbReference type="GlyGen" id="P33580">
    <property type="glycosylation" value="2 sites"/>
</dbReference>
<dbReference type="PaxDb" id="10116-ENSRNOP00000022614"/>
<dbReference type="GeneID" id="59088"/>
<dbReference type="KEGG" id="rno:59088"/>
<dbReference type="UCSC" id="RGD:620116">
    <property type="organism name" value="rat"/>
</dbReference>
<dbReference type="AGR" id="RGD:620116"/>
<dbReference type="CTD" id="59088"/>
<dbReference type="RGD" id="620116">
    <property type="gene designation" value="Prl8a4"/>
</dbReference>
<dbReference type="InParanoid" id="P33580"/>
<dbReference type="OrthoDB" id="62315at9989"/>
<dbReference type="PhylomeDB" id="P33580"/>
<dbReference type="PRO" id="PR:P33580"/>
<dbReference type="Proteomes" id="UP000002494">
    <property type="component" value="Unplaced"/>
</dbReference>
<dbReference type="GO" id="GO:0005615">
    <property type="term" value="C:extracellular space"/>
    <property type="evidence" value="ECO:0000318"/>
    <property type="project" value="GO_Central"/>
</dbReference>
<dbReference type="GO" id="GO:0005179">
    <property type="term" value="F:hormone activity"/>
    <property type="evidence" value="ECO:0000318"/>
    <property type="project" value="GO_Central"/>
</dbReference>
<dbReference type="GO" id="GO:0005148">
    <property type="term" value="F:prolactin receptor binding"/>
    <property type="evidence" value="ECO:0000318"/>
    <property type="project" value="GO_Central"/>
</dbReference>
<dbReference type="GO" id="GO:0007166">
    <property type="term" value="P:cell surface receptor signaling pathway"/>
    <property type="evidence" value="ECO:0000318"/>
    <property type="project" value="GO_Central"/>
</dbReference>
<dbReference type="GO" id="GO:0007565">
    <property type="term" value="P:female pregnancy"/>
    <property type="evidence" value="ECO:0000318"/>
    <property type="project" value="GO_Central"/>
</dbReference>
<dbReference type="GO" id="GO:0030879">
    <property type="term" value="P:mammary gland development"/>
    <property type="evidence" value="ECO:0000318"/>
    <property type="project" value="GO_Central"/>
</dbReference>
<dbReference type="GO" id="GO:1903489">
    <property type="term" value="P:positive regulation of lactation"/>
    <property type="evidence" value="ECO:0000318"/>
    <property type="project" value="GO_Central"/>
</dbReference>
<dbReference type="GO" id="GO:0046427">
    <property type="term" value="P:positive regulation of receptor signaling pathway via JAK-STAT"/>
    <property type="evidence" value="ECO:0000318"/>
    <property type="project" value="GO_Central"/>
</dbReference>
<dbReference type="GO" id="GO:0031667">
    <property type="term" value="P:response to nutrient levels"/>
    <property type="evidence" value="ECO:0000318"/>
    <property type="project" value="GO_Central"/>
</dbReference>
<dbReference type="CDD" id="cd10288">
    <property type="entry name" value="prolactin_like"/>
    <property type="match status" value="1"/>
</dbReference>
<dbReference type="FunFam" id="1.20.1250.10:FF:000036">
    <property type="entry name" value="Growth hormone d15"/>
    <property type="match status" value="1"/>
</dbReference>
<dbReference type="Gene3D" id="1.20.1250.10">
    <property type="match status" value="1"/>
</dbReference>
<dbReference type="InterPro" id="IPR009079">
    <property type="entry name" value="4_helix_cytokine-like_core"/>
</dbReference>
<dbReference type="InterPro" id="IPR001400">
    <property type="entry name" value="Somatotropin/Prolactin"/>
</dbReference>
<dbReference type="PANTHER" id="PTHR11417:SF69">
    <property type="entry name" value="PROLACTIN-8A6-RELATED"/>
    <property type="match status" value="1"/>
</dbReference>
<dbReference type="PANTHER" id="PTHR11417">
    <property type="entry name" value="SOMATOTROPIN,PROLACTIN"/>
    <property type="match status" value="1"/>
</dbReference>
<dbReference type="Pfam" id="PF00103">
    <property type="entry name" value="Hormone_1"/>
    <property type="match status" value="1"/>
</dbReference>
<dbReference type="SUPFAM" id="SSF47266">
    <property type="entry name" value="4-helical cytokines"/>
    <property type="match status" value="1"/>
</dbReference>
<reference key="1">
    <citation type="journal article" date="1998" name="Endocrinology">
        <title>Molecular cloning and characterization of a new member of the rat placental prolactin (PRL) family, PRL-like protein H.</title>
        <authorList>
            <person name="Iwatsuki K."/>
            <person name="Oda M."/>
            <person name="Sun W."/>
            <person name="Tanaka S."/>
            <person name="Ogawa T."/>
            <person name="Shiota K."/>
        </authorList>
    </citation>
    <scope>NUCLEOTIDE SEQUENCE [MRNA]</scope>
    <scope>TISSUE SPECIFICITY</scope>
</reference>
<reference key="2">
    <citation type="journal article" date="1990" name="Endocrinology">
        <title>Identification of a novel family of growth hormone-related proteins secreted by rat placenta.</title>
        <authorList>
            <person name="Ogilvie S."/>
            <person name="Buhi W.C."/>
            <person name="Olson J.A."/>
            <person name="Shiverick K.T."/>
        </authorList>
    </citation>
    <scope>PROTEIN SEQUENCE OF 32-68</scope>
    <source>
        <tissue>Placenta</tissue>
    </source>
</reference>
<proteinExistence type="evidence at protein level"/>
<keyword id="KW-0903">Direct protein sequencing</keyword>
<keyword id="KW-1015">Disulfide bond</keyword>
<keyword id="KW-0325">Glycoprotein</keyword>
<keyword id="KW-0372">Hormone</keyword>
<keyword id="KW-1185">Reference proteome</keyword>
<keyword id="KW-0964">Secreted</keyword>
<keyword id="KW-0732">Signal</keyword>
<organism>
    <name type="scientific">Rattus norvegicus</name>
    <name type="common">Rat</name>
    <dbReference type="NCBI Taxonomy" id="10116"/>
    <lineage>
        <taxon>Eukaryota</taxon>
        <taxon>Metazoa</taxon>
        <taxon>Chordata</taxon>
        <taxon>Craniata</taxon>
        <taxon>Vertebrata</taxon>
        <taxon>Euteleostomi</taxon>
        <taxon>Mammalia</taxon>
        <taxon>Eutheria</taxon>
        <taxon>Euarchontoglires</taxon>
        <taxon>Glires</taxon>
        <taxon>Rodentia</taxon>
        <taxon>Myomorpha</taxon>
        <taxon>Muroidea</taxon>
        <taxon>Muridae</taxon>
        <taxon>Murinae</taxon>
        <taxon>Rattus</taxon>
    </lineage>
</organism>
<comment type="subcellular location">
    <subcellularLocation>
        <location>Secreted</location>
    </subcellularLocation>
</comment>
<comment type="tissue specificity">
    <text evidence="3">Placental basal zone cells.</text>
</comment>
<comment type="developmental stage">
    <text>Mid to late gestation (gestation day 15).</text>
</comment>
<comment type="similarity">
    <text evidence="4">Belongs to the somatotropin/prolactin family.</text>
</comment>
<accession>P33580</accession>
<accession>Q9R2D1</accession>
<sequence>MMKLALSQPPFSGTLLMLVVSILLLWEKAASIPACMVEEGDCWDPLQETFNSAIQRAETLCNLADQLYVEFYQNQFSSRQFADLNSKLIKRDETVLKAGIYCHSTLAKPQTRGGNFEIEEHLKMLINFVGSWISPLFHLVIELSAMEGVPETILCKVKDLEENNRQLLDDLRWILTKVSPTAEIREEFPSWEHLSFLKSSNKNNKFLAMFNLSNCLDNDTKFTLHHLRIFKCLITGKDC</sequence>
<feature type="signal peptide" evidence="2">
    <location>
        <begin position="1"/>
        <end position="31"/>
    </location>
</feature>
<feature type="chain" id="PRO_0000043398" description="Prolactin-8A4">
    <location>
        <begin position="32"/>
        <end position="239"/>
    </location>
</feature>
<feature type="glycosylation site" description="N-linked (GlcNAc...) asparagine" evidence="2">
    <location>
        <position position="211"/>
    </location>
</feature>
<feature type="glycosylation site" description="N-linked (GlcNAc...) asparagine" evidence="2">
    <location>
        <position position="218"/>
    </location>
</feature>
<feature type="disulfide bond" evidence="2">
    <location>
        <begin position="35"/>
        <end position="42"/>
    </location>
</feature>
<feature type="disulfide bond" evidence="1">
    <location>
        <begin position="102"/>
        <end position="215"/>
    </location>
</feature>
<feature type="disulfide bond" evidence="1">
    <location>
        <begin position="232"/>
        <end position="239"/>
    </location>
</feature>
<name>PR8A4_RAT</name>
<gene>
    <name type="primary">Prl8a4</name>
    <name type="synonym">Prlph</name>
</gene>
<evidence type="ECO:0000250" key="1"/>
<evidence type="ECO:0000255" key="2"/>
<evidence type="ECO:0000269" key="3">
    <source>
    </source>
</evidence>
<evidence type="ECO:0000305" key="4"/>
<protein>
    <recommendedName>
        <fullName>Prolactin-8A4</fullName>
    </recommendedName>
    <alternativeName>
        <fullName>Growth hormone-related placental protein 3</fullName>
    </alternativeName>
    <alternativeName>
        <fullName>Placental prolactin-like protein H</fullName>
        <shortName>PLP-H</shortName>
        <shortName>PRL-like protein H</shortName>
    </alternativeName>
</protein>